<organism>
    <name type="scientific">Homo sapiens</name>
    <name type="common">Human</name>
    <dbReference type="NCBI Taxonomy" id="9606"/>
    <lineage>
        <taxon>Eukaryota</taxon>
        <taxon>Metazoa</taxon>
        <taxon>Chordata</taxon>
        <taxon>Craniata</taxon>
        <taxon>Vertebrata</taxon>
        <taxon>Euteleostomi</taxon>
        <taxon>Mammalia</taxon>
        <taxon>Eutheria</taxon>
        <taxon>Euarchontoglires</taxon>
        <taxon>Primates</taxon>
        <taxon>Haplorrhini</taxon>
        <taxon>Catarrhini</taxon>
        <taxon>Hominidae</taxon>
        <taxon>Homo</taxon>
    </lineage>
</organism>
<accession>Q15628</accession>
<accession>B2RDS3</accession>
<accession>B3KQZ9</accession>
<accession>Q52NZ1</accession>
<dbReference type="EMBL" id="L41690">
    <property type="protein sequence ID" value="AAA98482.1"/>
    <property type="status" value="ALT_INIT"/>
    <property type="molecule type" value="mRNA"/>
</dbReference>
<dbReference type="EMBL" id="AJ311614">
    <property type="protein sequence ID" value="CAC38018.2"/>
    <property type="molecule type" value="Genomic_DNA"/>
</dbReference>
<dbReference type="EMBL" id="AJ311615">
    <property type="protein sequence ID" value="CAC38018.2"/>
    <property type="status" value="JOINED"/>
    <property type="molecule type" value="Genomic_DNA"/>
</dbReference>
<dbReference type="EMBL" id="AJ311616">
    <property type="protein sequence ID" value="CAC38018.2"/>
    <property type="status" value="JOINED"/>
    <property type="molecule type" value="Genomic_DNA"/>
</dbReference>
<dbReference type="EMBL" id="AY995114">
    <property type="protein sequence ID" value="AAX89407.1"/>
    <property type="molecule type" value="Genomic_DNA"/>
</dbReference>
<dbReference type="EMBL" id="BT006934">
    <property type="protein sequence ID" value="AAP35580.1"/>
    <property type="molecule type" value="mRNA"/>
</dbReference>
<dbReference type="EMBL" id="AY575851">
    <property type="protein sequence ID" value="AAS68637.1"/>
    <property type="molecule type" value="Genomic_DNA"/>
</dbReference>
<dbReference type="EMBL" id="AK090673">
    <property type="protein sequence ID" value="BAG52211.1"/>
    <property type="molecule type" value="mRNA"/>
</dbReference>
<dbReference type="EMBL" id="AK315654">
    <property type="protein sequence ID" value="BAG38020.1"/>
    <property type="molecule type" value="mRNA"/>
</dbReference>
<dbReference type="EMBL" id="AC074143">
    <property type="status" value="NOT_ANNOTATED_CDS"/>
    <property type="molecule type" value="Genomic_DNA"/>
</dbReference>
<dbReference type="EMBL" id="CH471092">
    <property type="protein sequence ID" value="EAW83081.1"/>
    <property type="molecule type" value="Genomic_DNA"/>
</dbReference>
<dbReference type="EMBL" id="BC004491">
    <property type="protein sequence ID" value="AAH04491.1"/>
    <property type="molecule type" value="mRNA"/>
</dbReference>
<dbReference type="CCDS" id="CCDS10829.1">
    <molecule id="Q15628-1"/>
</dbReference>
<dbReference type="PIR" id="A56911">
    <property type="entry name" value="A56911"/>
</dbReference>
<dbReference type="RefSeq" id="NP_001310481.1">
    <molecule id="Q15628-1"/>
    <property type="nucleotide sequence ID" value="NM_001323552.2"/>
</dbReference>
<dbReference type="RefSeq" id="NP_003780.1">
    <molecule id="Q15628-1"/>
    <property type="nucleotide sequence ID" value="NM_003789.4"/>
</dbReference>
<dbReference type="RefSeq" id="XP_005256270.1">
    <property type="nucleotide sequence ID" value="XM_005256213.3"/>
</dbReference>
<dbReference type="RefSeq" id="XP_016879304.1">
    <property type="nucleotide sequence ID" value="XM_017023815.1"/>
</dbReference>
<dbReference type="PDB" id="1F2H">
    <property type="method" value="NMR"/>
    <property type="chains" value="A=1-169"/>
</dbReference>
<dbReference type="PDB" id="1F3V">
    <property type="method" value="X-ray"/>
    <property type="resolution" value="2.00 A"/>
    <property type="chains" value="A=1-179"/>
</dbReference>
<dbReference type="PDB" id="5XME">
    <property type="method" value="NMR"/>
    <property type="chains" value="A=199-312"/>
</dbReference>
<dbReference type="PDB" id="6AC0">
    <property type="method" value="X-ray"/>
    <property type="resolution" value="1.45 A"/>
    <property type="chains" value="A=195-312"/>
</dbReference>
<dbReference type="PDB" id="7CSQ">
    <property type="method" value="NMR"/>
    <property type="chains" value="B=199-312"/>
</dbReference>
<dbReference type="PDBsum" id="1F2H"/>
<dbReference type="PDBsum" id="1F3V"/>
<dbReference type="PDBsum" id="5XME"/>
<dbReference type="PDBsum" id="6AC0"/>
<dbReference type="PDBsum" id="7CSQ"/>
<dbReference type="BMRB" id="Q15628"/>
<dbReference type="SMR" id="Q15628"/>
<dbReference type="BioGRID" id="114257">
    <property type="interactions" value="109"/>
</dbReference>
<dbReference type="ComplexPortal" id="CPX-25723">
    <property type="entry name" value="sTNF-TNR1A receptor-ligand core complex, BIRC3 variant"/>
</dbReference>
<dbReference type="ComplexPortal" id="CPX-25726">
    <property type="entry name" value="mTNF-TNR1A receptor-ligand core complex, BIRC3 variant"/>
</dbReference>
<dbReference type="ComplexPortal" id="CPX-8828">
    <property type="entry name" value="sTNF-TNR1A receptor-ligand core complex, BIRC2 variant"/>
</dbReference>
<dbReference type="ComplexPortal" id="CPX-8932">
    <property type="entry name" value="mTNF-TNR1A receptor-ligand core complex, BIRC2 variant"/>
</dbReference>
<dbReference type="CORUM" id="Q15628"/>
<dbReference type="DIP" id="DIP-285N"/>
<dbReference type="FunCoup" id="Q15628">
    <property type="interactions" value="1099"/>
</dbReference>
<dbReference type="IntAct" id="Q15628">
    <property type="interactions" value="75"/>
</dbReference>
<dbReference type="MINT" id="Q15628"/>
<dbReference type="STRING" id="9606.ENSP00000341268"/>
<dbReference type="GlyCosmos" id="Q15628">
    <property type="glycosylation" value="2 sites, No reported glycans"/>
</dbReference>
<dbReference type="GlyGen" id="Q15628">
    <property type="glycosylation" value="1 site, 1 O-linked glycan (1 site)"/>
</dbReference>
<dbReference type="iPTMnet" id="Q15628"/>
<dbReference type="PhosphoSitePlus" id="Q15628"/>
<dbReference type="BioMuta" id="TRADD"/>
<dbReference type="DMDM" id="6094511"/>
<dbReference type="jPOST" id="Q15628"/>
<dbReference type="MassIVE" id="Q15628"/>
<dbReference type="PaxDb" id="9606-ENSP00000341268"/>
<dbReference type="PeptideAtlas" id="Q15628"/>
<dbReference type="ProteomicsDB" id="60663">
    <molecule id="Q15628-1"/>
</dbReference>
<dbReference type="Pumba" id="Q15628"/>
<dbReference type="Antibodypedia" id="3894">
    <property type="antibodies" value="527 antibodies from 43 providers"/>
</dbReference>
<dbReference type="DNASU" id="8717"/>
<dbReference type="Ensembl" id="ENST00000345057.9">
    <molecule id="Q15628-1"/>
    <property type="protein sequence ID" value="ENSP00000341268.4"/>
    <property type="gene ID" value="ENSG00000102871.16"/>
</dbReference>
<dbReference type="Ensembl" id="ENST00000486556.1">
    <molecule id="Q15628-2"/>
    <property type="protein sequence ID" value="ENSP00000462591.1"/>
    <property type="gene ID" value="ENSG00000102871.16"/>
</dbReference>
<dbReference type="GeneID" id="8717"/>
<dbReference type="KEGG" id="hsa:8717"/>
<dbReference type="MANE-Select" id="ENST00000345057.9">
    <property type="protein sequence ID" value="ENSP00000341268.4"/>
    <property type="RefSeq nucleotide sequence ID" value="NM_003789.4"/>
    <property type="RefSeq protein sequence ID" value="NP_003780.1"/>
</dbReference>
<dbReference type="UCSC" id="uc002erh.2">
    <molecule id="Q15628-1"/>
    <property type="organism name" value="human"/>
</dbReference>
<dbReference type="AGR" id="HGNC:12030"/>
<dbReference type="CTD" id="8717"/>
<dbReference type="DisGeNET" id="8717"/>
<dbReference type="GeneCards" id="TRADD"/>
<dbReference type="HGNC" id="HGNC:12030">
    <property type="gene designation" value="TRADD"/>
</dbReference>
<dbReference type="HPA" id="ENSG00000102871">
    <property type="expression patterns" value="Low tissue specificity"/>
</dbReference>
<dbReference type="MIM" id="603500">
    <property type="type" value="gene"/>
</dbReference>
<dbReference type="neXtProt" id="NX_Q15628"/>
<dbReference type="OpenTargets" id="ENSG00000102871"/>
<dbReference type="PharmGKB" id="PA36707"/>
<dbReference type="VEuPathDB" id="HostDB:ENSG00000102871"/>
<dbReference type="eggNOG" id="ENOG502RXWE">
    <property type="taxonomic scope" value="Eukaryota"/>
</dbReference>
<dbReference type="GeneTree" id="ENSGT00390000002016"/>
<dbReference type="HOGENOM" id="CLU_052183_0_0_1"/>
<dbReference type="InParanoid" id="Q15628"/>
<dbReference type="OMA" id="QPCSRFL"/>
<dbReference type="OrthoDB" id="9903238at2759"/>
<dbReference type="PAN-GO" id="Q15628">
    <property type="GO annotations" value="3 GO annotations based on evolutionary models"/>
</dbReference>
<dbReference type="PhylomeDB" id="Q15628"/>
<dbReference type="TreeFam" id="TF331882"/>
<dbReference type="PathwayCommons" id="Q15628"/>
<dbReference type="Reactome" id="R-HSA-140534">
    <property type="pathway name" value="Caspase activation via Death Receptors in the presence of ligand"/>
</dbReference>
<dbReference type="Reactome" id="R-HSA-3371378">
    <property type="pathway name" value="Regulation by c-FLIP"/>
</dbReference>
<dbReference type="Reactome" id="R-HSA-5213460">
    <property type="pathway name" value="RIPK1-mediated regulated necrosis"/>
</dbReference>
<dbReference type="Reactome" id="R-HSA-5218900">
    <property type="pathway name" value="CASP8 activity is inhibited"/>
</dbReference>
<dbReference type="Reactome" id="R-HSA-5357786">
    <property type="pathway name" value="TNFR1-induced proapoptotic signaling"/>
</dbReference>
<dbReference type="Reactome" id="R-HSA-5357905">
    <property type="pathway name" value="Regulation of TNFR1 signaling"/>
</dbReference>
<dbReference type="Reactome" id="R-HSA-5357956">
    <property type="pathway name" value="TNFR1-induced NF-kappa-B signaling pathway"/>
</dbReference>
<dbReference type="Reactome" id="R-HSA-5675482">
    <property type="pathway name" value="Regulation of necroptotic cell death"/>
</dbReference>
<dbReference type="Reactome" id="R-HSA-69416">
    <property type="pathway name" value="Dimerization of procaspase-8"/>
</dbReference>
<dbReference type="Reactome" id="R-HSA-75893">
    <property type="pathway name" value="TNF signaling"/>
</dbReference>
<dbReference type="Reactome" id="R-HSA-9693928">
    <property type="pathway name" value="Defective RIPK1-mediated regulated necrosis"/>
</dbReference>
<dbReference type="SignaLink" id="Q15628"/>
<dbReference type="SIGNOR" id="Q15628"/>
<dbReference type="BioGRID-ORCS" id="8717">
    <property type="hits" value="21 hits in 1167 CRISPR screens"/>
</dbReference>
<dbReference type="EvolutionaryTrace" id="Q15628"/>
<dbReference type="GeneWiki" id="TRADD"/>
<dbReference type="GenomeRNAi" id="8717"/>
<dbReference type="Pharos" id="Q15628">
    <property type="development level" value="Tbio"/>
</dbReference>
<dbReference type="PRO" id="PR:Q15628"/>
<dbReference type="Proteomes" id="UP000005640">
    <property type="component" value="Chromosome 16"/>
</dbReference>
<dbReference type="RNAct" id="Q15628">
    <property type="molecule type" value="protein"/>
</dbReference>
<dbReference type="Bgee" id="ENSG00000102871">
    <property type="expression patterns" value="Expressed in pancreatic ductal cell and 195 other cell types or tissues"/>
</dbReference>
<dbReference type="GO" id="GO:0005737">
    <property type="term" value="C:cytoplasm"/>
    <property type="evidence" value="ECO:0000314"/>
    <property type="project" value="UniProtKB"/>
</dbReference>
<dbReference type="GO" id="GO:0009898">
    <property type="term" value="C:cytoplasmic side of plasma membrane"/>
    <property type="evidence" value="ECO:0000305"/>
    <property type="project" value="UniProt"/>
</dbReference>
<dbReference type="GO" id="GO:0005856">
    <property type="term" value="C:cytoskeleton"/>
    <property type="evidence" value="ECO:0007669"/>
    <property type="project" value="UniProtKB-SubCell"/>
</dbReference>
<dbReference type="GO" id="GO:0005829">
    <property type="term" value="C:cytosol"/>
    <property type="evidence" value="ECO:0000304"/>
    <property type="project" value="Reactome"/>
</dbReference>
<dbReference type="GO" id="GO:0031264">
    <property type="term" value="C:death-inducing signaling complex"/>
    <property type="evidence" value="ECO:0000304"/>
    <property type="project" value="UniProtKB"/>
</dbReference>
<dbReference type="GO" id="GO:0005634">
    <property type="term" value="C:nucleus"/>
    <property type="evidence" value="ECO:0007669"/>
    <property type="project" value="UniProtKB-SubCell"/>
</dbReference>
<dbReference type="GO" id="GO:0005886">
    <property type="term" value="C:plasma membrane"/>
    <property type="evidence" value="ECO:0000314"/>
    <property type="project" value="UniProtKB"/>
</dbReference>
<dbReference type="GO" id="GO:0043235">
    <property type="term" value="C:receptor complex"/>
    <property type="evidence" value="ECO:0000314"/>
    <property type="project" value="BHF-UCL"/>
</dbReference>
<dbReference type="GO" id="GO:0002947">
    <property type="term" value="C:tumor necrosis factor receptor superfamily complex"/>
    <property type="evidence" value="ECO:0000314"/>
    <property type="project" value="UniProtKB"/>
</dbReference>
<dbReference type="GO" id="GO:0070513">
    <property type="term" value="F:death domain binding"/>
    <property type="evidence" value="ECO:0000353"/>
    <property type="project" value="BHF-UCL"/>
</dbReference>
<dbReference type="GO" id="GO:0042802">
    <property type="term" value="F:identical protein binding"/>
    <property type="evidence" value="ECO:0000353"/>
    <property type="project" value="IntAct"/>
</dbReference>
<dbReference type="GO" id="GO:0019900">
    <property type="term" value="F:kinase binding"/>
    <property type="evidence" value="ECO:0000353"/>
    <property type="project" value="BHF-UCL"/>
</dbReference>
<dbReference type="GO" id="GO:0030674">
    <property type="term" value="F:protein-macromolecule adaptor activity"/>
    <property type="evidence" value="ECO:0000314"/>
    <property type="project" value="UniProt"/>
</dbReference>
<dbReference type="GO" id="GO:0035591">
    <property type="term" value="F:signaling adaptor activity"/>
    <property type="evidence" value="ECO:0000250"/>
    <property type="project" value="UniProt"/>
</dbReference>
<dbReference type="GO" id="GO:0005068">
    <property type="term" value="F:transmembrane receptor protein tyrosine kinase adaptor activity"/>
    <property type="evidence" value="ECO:0000353"/>
    <property type="project" value="BHF-UCL"/>
</dbReference>
<dbReference type="GO" id="GO:0006915">
    <property type="term" value="P:apoptotic process"/>
    <property type="evidence" value="ECO:0000304"/>
    <property type="project" value="ProtInc"/>
</dbReference>
<dbReference type="GO" id="GO:0007249">
    <property type="term" value="P:canonical NF-kappaB signal transduction"/>
    <property type="evidence" value="ECO:0000315"/>
    <property type="project" value="ARUK-UCL"/>
</dbReference>
<dbReference type="GO" id="GO:0071356">
    <property type="term" value="P:cellular response to tumor necrosis factor"/>
    <property type="evidence" value="ECO:0000315"/>
    <property type="project" value="ARUK-UCL"/>
</dbReference>
<dbReference type="GO" id="GO:0097191">
    <property type="term" value="P:extrinsic apoptotic signaling pathway"/>
    <property type="evidence" value="ECO:0000315"/>
    <property type="project" value="UniProtKB"/>
</dbReference>
<dbReference type="GO" id="GO:0008625">
    <property type="term" value="P:extrinsic apoptotic signaling pathway via death domain receptors"/>
    <property type="evidence" value="ECO:0000304"/>
    <property type="project" value="BHF-UCL"/>
</dbReference>
<dbReference type="GO" id="GO:0043065">
    <property type="term" value="P:positive regulation of apoptotic process"/>
    <property type="evidence" value="ECO:0000304"/>
    <property type="project" value="UniProtKB"/>
</dbReference>
<dbReference type="GO" id="GO:0043123">
    <property type="term" value="P:positive regulation of canonical NF-kappaB signal transduction"/>
    <property type="evidence" value="ECO:0000270"/>
    <property type="project" value="UniProtKB"/>
</dbReference>
<dbReference type="GO" id="GO:0030335">
    <property type="term" value="P:positive regulation of cell migration"/>
    <property type="evidence" value="ECO:0000315"/>
    <property type="project" value="ARUK-UCL"/>
</dbReference>
<dbReference type="GO" id="GO:0051798">
    <property type="term" value="P:positive regulation of hair follicle development"/>
    <property type="evidence" value="ECO:0007669"/>
    <property type="project" value="Ensembl"/>
</dbReference>
<dbReference type="GO" id="GO:0050729">
    <property type="term" value="P:positive regulation of inflammatory response"/>
    <property type="evidence" value="ECO:0000315"/>
    <property type="project" value="ARUK-UCL"/>
</dbReference>
<dbReference type="GO" id="GO:0007165">
    <property type="term" value="P:signal transduction"/>
    <property type="evidence" value="ECO:0000304"/>
    <property type="project" value="ProtInc"/>
</dbReference>
<dbReference type="GO" id="GO:0036462">
    <property type="term" value="P:TRAIL-activated apoptotic signaling pathway"/>
    <property type="evidence" value="ECO:0000314"/>
    <property type="project" value="UniProt"/>
</dbReference>
<dbReference type="GO" id="GO:0033209">
    <property type="term" value="P:tumor necrosis factor-mediated signaling pathway"/>
    <property type="evidence" value="ECO:0000314"/>
    <property type="project" value="UniProt"/>
</dbReference>
<dbReference type="FunFam" id="1.10.533.10:FF:000042">
    <property type="entry name" value="Tumor necrosis factor receptor type 1-associated DEATH domain protein"/>
    <property type="match status" value="1"/>
</dbReference>
<dbReference type="FunFam" id="3.30.70.680:FF:000001">
    <property type="entry name" value="Tumor necrosis factor receptor type 1-associated DEATH domain protein"/>
    <property type="match status" value="1"/>
</dbReference>
<dbReference type="Gene3D" id="1.10.533.10">
    <property type="entry name" value="Death Domain, Fas"/>
    <property type="match status" value="1"/>
</dbReference>
<dbReference type="Gene3D" id="3.30.70.680">
    <property type="entry name" value="TRADD, N-terminal domain"/>
    <property type="match status" value="1"/>
</dbReference>
<dbReference type="InterPro" id="IPR011029">
    <property type="entry name" value="DEATH-like_dom_sf"/>
</dbReference>
<dbReference type="InterPro" id="IPR000488">
    <property type="entry name" value="Death_dom"/>
</dbReference>
<dbReference type="InterPro" id="IPR035712">
    <property type="entry name" value="TRADD"/>
</dbReference>
<dbReference type="InterPro" id="IPR009095">
    <property type="entry name" value="TRADD_N"/>
</dbReference>
<dbReference type="InterPro" id="IPR036729">
    <property type="entry name" value="TRADD_N_sf"/>
</dbReference>
<dbReference type="PANTHER" id="PTHR14913">
    <property type="entry name" value="TUMOR NECROSIS FACTOR RECEPTOR TYPE 1-ASSOCIATED DEATH DOMAIN PROTEIN"/>
    <property type="match status" value="1"/>
</dbReference>
<dbReference type="PANTHER" id="PTHR14913:SF0">
    <property type="entry name" value="TUMOR NECROSIS FACTOR RECEPTOR TYPE 1-ASSOCIATED DEATH DOMAIN PROTEIN"/>
    <property type="match status" value="1"/>
</dbReference>
<dbReference type="Pfam" id="PF00531">
    <property type="entry name" value="Death"/>
    <property type="match status" value="1"/>
</dbReference>
<dbReference type="Pfam" id="PF09034">
    <property type="entry name" value="TRADD_N"/>
    <property type="match status" value="1"/>
</dbReference>
<dbReference type="SMART" id="SM00005">
    <property type="entry name" value="DEATH"/>
    <property type="match status" value="1"/>
</dbReference>
<dbReference type="SUPFAM" id="SSF47986">
    <property type="entry name" value="DEATH domain"/>
    <property type="match status" value="1"/>
</dbReference>
<dbReference type="SUPFAM" id="SSF55044">
    <property type="entry name" value="TRADD, N-terminal domain"/>
    <property type="match status" value="1"/>
</dbReference>
<dbReference type="PROSITE" id="PS50017">
    <property type="entry name" value="DEATH_DOMAIN"/>
    <property type="match status" value="1"/>
</dbReference>
<evidence type="ECO:0000250" key="1">
    <source>
        <dbReference type="UniProtKB" id="Q3U0V2"/>
    </source>
</evidence>
<evidence type="ECO:0000255" key="2">
    <source>
        <dbReference type="PROSITE-ProRule" id="PRU00064"/>
    </source>
</evidence>
<evidence type="ECO:0000256" key="3">
    <source>
        <dbReference type="SAM" id="MobiDB-lite"/>
    </source>
</evidence>
<evidence type="ECO:0000269" key="4">
    <source>
    </source>
</evidence>
<evidence type="ECO:0000269" key="5">
    <source>
    </source>
</evidence>
<evidence type="ECO:0000269" key="6">
    <source>
    </source>
</evidence>
<evidence type="ECO:0000269" key="7">
    <source>
    </source>
</evidence>
<evidence type="ECO:0000269" key="8">
    <source>
    </source>
</evidence>
<evidence type="ECO:0000269" key="9">
    <source>
    </source>
</evidence>
<evidence type="ECO:0000269" key="10">
    <source>
    </source>
</evidence>
<evidence type="ECO:0000269" key="11">
    <source>
    </source>
</evidence>
<evidence type="ECO:0000269" key="12">
    <source>
    </source>
</evidence>
<evidence type="ECO:0000269" key="13">
    <source>
    </source>
</evidence>
<evidence type="ECO:0000269" key="14">
    <source>
    </source>
</evidence>
<evidence type="ECO:0000269" key="15">
    <source>
    </source>
</evidence>
<evidence type="ECO:0000269" key="16">
    <source>
    </source>
</evidence>
<evidence type="ECO:0000269" key="17">
    <source>
    </source>
</evidence>
<evidence type="ECO:0000269" key="18">
    <source>
    </source>
</evidence>
<evidence type="ECO:0000269" key="19">
    <source>
    </source>
</evidence>
<evidence type="ECO:0000269" key="20">
    <source>
    </source>
</evidence>
<evidence type="ECO:0000269" key="21">
    <source>
    </source>
</evidence>
<evidence type="ECO:0000303" key="22">
    <source>
    </source>
</evidence>
<evidence type="ECO:0000303" key="23">
    <source>
    </source>
</evidence>
<evidence type="ECO:0000305" key="24"/>
<evidence type="ECO:0000312" key="25">
    <source>
        <dbReference type="HGNC" id="HGNC:12030"/>
    </source>
</evidence>
<evidence type="ECO:0007744" key="26">
    <source>
        <dbReference type="PDB" id="6AC0"/>
    </source>
</evidence>
<evidence type="ECO:0007829" key="27">
    <source>
        <dbReference type="PDB" id="1F3V"/>
    </source>
</evidence>
<evidence type="ECO:0007829" key="28">
    <source>
        <dbReference type="PDB" id="5XME"/>
    </source>
</evidence>
<evidence type="ECO:0007829" key="29">
    <source>
        <dbReference type="PDB" id="6AC0"/>
    </source>
</evidence>
<gene>
    <name evidence="23 25" type="primary">TRADD</name>
</gene>
<sequence length="312" mass="34247">MAAGQNGHEEWVGSAYLFVESSLDKVVLSDAYAHPQQKVAVYRALQAALAESGGSPDVLQMLKIHRSDPQLIVQLRFCGRQPCGRFLRAYREGALRAALQRSLAAALAQHSVPLQLELRAGAERLDALLADEERCLSCILAQQPDRLRDEELAELEDALRNLKCGSGARGGDGEVASAPLQPPVPSLSEVKPPPPPPPAQTFLFQGQPVVNRPLSLKDQQTFARSVGLKWRKVGRSLQRGCRALRDPALDSLAYEYEREGLYEQAFQLLRRFVQAEGRRATLQRLVEALEENELTSLAEDLLGLTDPNGGLA</sequence>
<keyword id="KW-0002">3D-structure</keyword>
<keyword id="KW-0025">Alternative splicing</keyword>
<keyword id="KW-0053">Apoptosis</keyword>
<keyword id="KW-0963">Cytoplasm</keyword>
<keyword id="KW-0206">Cytoskeleton</keyword>
<keyword id="KW-0325">Glycoprotein</keyword>
<keyword id="KW-0539">Nucleus</keyword>
<keyword id="KW-1267">Proteomics identification</keyword>
<keyword id="KW-1185">Reference proteome</keyword>
<feature type="chain" id="PRO_0000065602" description="Tumor necrosis factor receptor type 1-associated DEATH domain protein">
    <location>
        <begin position="1"/>
        <end position="312"/>
    </location>
</feature>
<feature type="domain" description="Death" evidence="2">
    <location>
        <begin position="179"/>
        <end position="289"/>
    </location>
</feature>
<feature type="region of interest" description="Disordered" evidence="3">
    <location>
        <begin position="170"/>
        <end position="195"/>
    </location>
</feature>
<feature type="region of interest" description="Interaction with KRT14 and KRT18" evidence="7">
    <location>
        <begin position="222"/>
        <end position="289"/>
    </location>
</feature>
<feature type="short sequence motif" description="Nuclear export signal" evidence="1">
    <location>
        <begin position="147"/>
        <end position="163"/>
    </location>
</feature>
<feature type="short sequence motif" description="Nuclear localization signal" evidence="1">
    <location>
        <begin position="231"/>
        <end position="244"/>
    </location>
</feature>
<feature type="compositionally biased region" description="Pro residues" evidence="3">
    <location>
        <begin position="180"/>
        <end position="195"/>
    </location>
</feature>
<feature type="glycosylation site" description="(Microbial infection) N-beta-linked (GlcNAc) arginine" evidence="13 18 19 26">
    <location>
        <position position="235"/>
    </location>
</feature>
<feature type="glycosylation site" description="(Microbial infection) N-beta-linked (GlcNAc) arginine" evidence="19">
    <location>
        <position position="245"/>
    </location>
</feature>
<feature type="splice variant" id="VSP_056526" description="In isoform 2." evidence="22">
    <location>
        <begin position="1"/>
        <end position="60"/>
    </location>
</feature>
<feature type="mutagenesis site" description="Abolished GlcNAcylation by E.coli NleB1. Abolished ability to self-oligomerize. Strongly reduced GlcNAcylation by S.typhimurium Ssek1; when associated with A-245." evidence="13 19">
    <original>R</original>
    <variation>A</variation>
    <variation>K</variation>
    <location>
        <position position="235"/>
    </location>
</feature>
<feature type="mutagenesis site" description="Strongly reduced GlcNAcylation by S.typhimurium Ssek1; when associated with A-235." evidence="19">
    <original>R</original>
    <variation>A</variation>
    <location>
        <position position="245"/>
    </location>
</feature>
<feature type="strand" evidence="27">
    <location>
        <begin position="12"/>
        <end position="25"/>
    </location>
</feature>
<feature type="helix" evidence="27">
    <location>
        <begin position="28"/>
        <end position="33"/>
    </location>
</feature>
<feature type="turn" evidence="27">
    <location>
        <begin position="35"/>
        <end position="37"/>
    </location>
</feature>
<feature type="helix" evidence="27">
    <location>
        <begin position="38"/>
        <end position="52"/>
    </location>
</feature>
<feature type="turn" evidence="27">
    <location>
        <begin position="56"/>
        <end position="58"/>
    </location>
</feature>
<feature type="strand" evidence="27">
    <location>
        <begin position="59"/>
        <end position="66"/>
    </location>
</feature>
<feature type="strand" evidence="27">
    <location>
        <begin position="68"/>
        <end position="79"/>
    </location>
</feature>
<feature type="helix" evidence="27">
    <location>
        <begin position="80"/>
        <end position="91"/>
    </location>
</feature>
<feature type="helix" evidence="27">
    <location>
        <begin position="94"/>
        <end position="106"/>
    </location>
</feature>
<feature type="strand" evidence="27">
    <location>
        <begin position="114"/>
        <end position="120"/>
    </location>
</feature>
<feature type="helix" evidence="27">
    <location>
        <begin position="125"/>
        <end position="128"/>
    </location>
</feature>
<feature type="helix" evidence="27">
    <location>
        <begin position="132"/>
        <end position="141"/>
    </location>
</feature>
<feature type="helix" evidence="27">
    <location>
        <begin position="150"/>
        <end position="162"/>
    </location>
</feature>
<feature type="strand" evidence="29">
    <location>
        <begin position="200"/>
        <end position="204"/>
    </location>
</feature>
<feature type="strand" evidence="29">
    <location>
        <begin position="207"/>
        <end position="210"/>
    </location>
</feature>
<feature type="helix" evidence="29">
    <location>
        <begin position="216"/>
        <end position="225"/>
    </location>
</feature>
<feature type="helix" evidence="29">
    <location>
        <begin position="227"/>
        <end position="229"/>
    </location>
</feature>
<feature type="helix" evidence="29">
    <location>
        <begin position="230"/>
        <end position="238"/>
    </location>
</feature>
<feature type="helix" evidence="29">
    <location>
        <begin position="242"/>
        <end position="244"/>
    </location>
</feature>
<feature type="helix" evidence="29">
    <location>
        <begin position="248"/>
        <end position="256"/>
    </location>
</feature>
<feature type="helix" evidence="29">
    <location>
        <begin position="257"/>
        <end position="259"/>
    </location>
</feature>
<feature type="helix" evidence="29">
    <location>
        <begin position="261"/>
        <end position="276"/>
    </location>
</feature>
<feature type="helix" evidence="29">
    <location>
        <begin position="277"/>
        <end position="279"/>
    </location>
</feature>
<feature type="helix" evidence="29">
    <location>
        <begin position="282"/>
        <end position="291"/>
    </location>
</feature>
<feature type="helix" evidence="29">
    <location>
        <begin position="295"/>
        <end position="301"/>
    </location>
</feature>
<feature type="strand" evidence="28">
    <location>
        <begin position="306"/>
        <end position="308"/>
    </location>
</feature>
<reference key="1">
    <citation type="journal article" date="1995" name="Cell">
        <title>The TNF receptor 1-associated protein TRADD signals cell death and NF-kappa B activation.</title>
        <authorList>
            <person name="Hsu H."/>
            <person name="Xiong J."/>
            <person name="Goeddel D.V."/>
        </authorList>
    </citation>
    <scope>NUCLEOTIDE SEQUENCE [MRNA] (ISOFORM 1)</scope>
    <scope>FUNCTION</scope>
    <scope>IDENTIFICATION IN COMPLEX I</scope>
    <scope>TISSUE SPECIFICITY</scope>
    <scope>INTERACTION WITH TNFRSF1A</scope>
</reference>
<reference key="2">
    <citation type="submission" date="2001-07" db="EMBL/GenBank/DDBJ databases">
        <title>Sequence, genomic organisation, and mutation analysis of the human TRADD gene in childhood B- and T-lineage acute lymphoblastic leukemia and ALPS.</title>
        <authorList>
            <person name="Scheuerpflug C.G."/>
            <person name="Dechant M."/>
            <person name="Fellenberg J."/>
            <person name="Ewerbeck V."/>
            <person name="Debatin K.M."/>
        </authorList>
    </citation>
    <scope>NUCLEOTIDE SEQUENCE [GENOMIC DNA]</scope>
</reference>
<reference key="3">
    <citation type="submission" date="2005-03" db="EMBL/GenBank/DDBJ databases">
        <title>Cloning of the human TRADD gene locus.</title>
        <authorList>
            <person name="Kaiser C."/>
            <person name="Kohstall B."/>
            <person name="Kieser A."/>
        </authorList>
    </citation>
    <scope>NUCLEOTIDE SEQUENCE [GENOMIC DNA]</scope>
</reference>
<reference key="4">
    <citation type="submission" date="2004-10" db="EMBL/GenBank/DDBJ databases">
        <title>Cloning of human full-length CDSs in BD Creator(TM) system donor vector.</title>
        <authorList>
            <person name="Kalnine N."/>
            <person name="Chen X."/>
            <person name="Rolfs A."/>
            <person name="Halleck A."/>
            <person name="Hines L."/>
            <person name="Eisenstein S."/>
            <person name="Koundinya M."/>
            <person name="Raphael J."/>
            <person name="Moreira D."/>
            <person name="Kelley T."/>
            <person name="LaBaer J."/>
            <person name="Lin Y."/>
            <person name="Phelan M."/>
            <person name="Farmer A."/>
        </authorList>
    </citation>
    <scope>NUCLEOTIDE SEQUENCE [LARGE SCALE MRNA] (ISOFORM 1)</scope>
</reference>
<reference key="5">
    <citation type="submission" date="2004-03" db="EMBL/GenBank/DDBJ databases">
        <authorList>
            <consortium name="SeattleSNPs variation discovery resource"/>
        </authorList>
    </citation>
    <scope>NUCLEOTIDE SEQUENCE [GENOMIC DNA]</scope>
</reference>
<reference key="6">
    <citation type="journal article" date="2004" name="Nat. Genet.">
        <title>Complete sequencing and characterization of 21,243 full-length human cDNAs.</title>
        <authorList>
            <person name="Ota T."/>
            <person name="Suzuki Y."/>
            <person name="Nishikawa T."/>
            <person name="Otsuki T."/>
            <person name="Sugiyama T."/>
            <person name="Irie R."/>
            <person name="Wakamatsu A."/>
            <person name="Hayashi K."/>
            <person name="Sato H."/>
            <person name="Nagai K."/>
            <person name="Kimura K."/>
            <person name="Makita H."/>
            <person name="Sekine M."/>
            <person name="Obayashi M."/>
            <person name="Nishi T."/>
            <person name="Shibahara T."/>
            <person name="Tanaka T."/>
            <person name="Ishii S."/>
            <person name="Yamamoto J."/>
            <person name="Saito K."/>
            <person name="Kawai Y."/>
            <person name="Isono Y."/>
            <person name="Nakamura Y."/>
            <person name="Nagahari K."/>
            <person name="Murakami K."/>
            <person name="Yasuda T."/>
            <person name="Iwayanagi T."/>
            <person name="Wagatsuma M."/>
            <person name="Shiratori A."/>
            <person name="Sudo H."/>
            <person name="Hosoiri T."/>
            <person name="Kaku Y."/>
            <person name="Kodaira H."/>
            <person name="Kondo H."/>
            <person name="Sugawara M."/>
            <person name="Takahashi M."/>
            <person name="Kanda K."/>
            <person name="Yokoi T."/>
            <person name="Furuya T."/>
            <person name="Kikkawa E."/>
            <person name="Omura Y."/>
            <person name="Abe K."/>
            <person name="Kamihara K."/>
            <person name="Katsuta N."/>
            <person name="Sato K."/>
            <person name="Tanikawa M."/>
            <person name="Yamazaki M."/>
            <person name="Ninomiya K."/>
            <person name="Ishibashi T."/>
            <person name="Yamashita H."/>
            <person name="Murakawa K."/>
            <person name="Fujimori K."/>
            <person name="Tanai H."/>
            <person name="Kimata M."/>
            <person name="Watanabe M."/>
            <person name="Hiraoka S."/>
            <person name="Chiba Y."/>
            <person name="Ishida S."/>
            <person name="Ono Y."/>
            <person name="Takiguchi S."/>
            <person name="Watanabe S."/>
            <person name="Yosida M."/>
            <person name="Hotuta T."/>
            <person name="Kusano J."/>
            <person name="Kanehori K."/>
            <person name="Takahashi-Fujii A."/>
            <person name="Hara H."/>
            <person name="Tanase T.-O."/>
            <person name="Nomura Y."/>
            <person name="Togiya S."/>
            <person name="Komai F."/>
            <person name="Hara R."/>
            <person name="Takeuchi K."/>
            <person name="Arita M."/>
            <person name="Imose N."/>
            <person name="Musashino K."/>
            <person name="Yuuki H."/>
            <person name="Oshima A."/>
            <person name="Sasaki N."/>
            <person name="Aotsuka S."/>
            <person name="Yoshikawa Y."/>
            <person name="Matsunawa H."/>
            <person name="Ichihara T."/>
            <person name="Shiohata N."/>
            <person name="Sano S."/>
            <person name="Moriya S."/>
            <person name="Momiyama H."/>
            <person name="Satoh N."/>
            <person name="Takami S."/>
            <person name="Terashima Y."/>
            <person name="Suzuki O."/>
            <person name="Nakagawa S."/>
            <person name="Senoh A."/>
            <person name="Mizoguchi H."/>
            <person name="Goto Y."/>
            <person name="Shimizu F."/>
            <person name="Wakebe H."/>
            <person name="Hishigaki H."/>
            <person name="Watanabe T."/>
            <person name="Sugiyama A."/>
            <person name="Takemoto M."/>
            <person name="Kawakami B."/>
            <person name="Yamazaki M."/>
            <person name="Watanabe K."/>
            <person name="Kumagai A."/>
            <person name="Itakura S."/>
            <person name="Fukuzumi Y."/>
            <person name="Fujimori Y."/>
            <person name="Komiyama M."/>
            <person name="Tashiro H."/>
            <person name="Tanigami A."/>
            <person name="Fujiwara T."/>
            <person name="Ono T."/>
            <person name="Yamada K."/>
            <person name="Fujii Y."/>
            <person name="Ozaki K."/>
            <person name="Hirao M."/>
            <person name="Ohmori Y."/>
            <person name="Kawabata A."/>
            <person name="Hikiji T."/>
            <person name="Kobatake N."/>
            <person name="Inagaki H."/>
            <person name="Ikema Y."/>
            <person name="Okamoto S."/>
            <person name="Okitani R."/>
            <person name="Kawakami T."/>
            <person name="Noguchi S."/>
            <person name="Itoh T."/>
            <person name="Shigeta K."/>
            <person name="Senba T."/>
            <person name="Matsumura K."/>
            <person name="Nakajima Y."/>
            <person name="Mizuno T."/>
            <person name="Morinaga M."/>
            <person name="Sasaki M."/>
            <person name="Togashi T."/>
            <person name="Oyama M."/>
            <person name="Hata H."/>
            <person name="Watanabe M."/>
            <person name="Komatsu T."/>
            <person name="Mizushima-Sugano J."/>
            <person name="Satoh T."/>
            <person name="Shirai Y."/>
            <person name="Takahashi Y."/>
            <person name="Nakagawa K."/>
            <person name="Okumura K."/>
            <person name="Nagase T."/>
            <person name="Nomura N."/>
            <person name="Kikuchi H."/>
            <person name="Masuho Y."/>
            <person name="Yamashita R."/>
            <person name="Nakai K."/>
            <person name="Yada T."/>
            <person name="Nakamura Y."/>
            <person name="Ohara O."/>
            <person name="Isogai T."/>
            <person name="Sugano S."/>
        </authorList>
    </citation>
    <scope>NUCLEOTIDE SEQUENCE [LARGE SCALE MRNA] (ISOFORMS 1 AND 2)</scope>
    <source>
        <tissue>Cerebellum</tissue>
        <tissue>Mammary gland</tissue>
    </source>
</reference>
<reference key="7">
    <citation type="journal article" date="2004" name="Nature">
        <title>The sequence and analysis of duplication-rich human chromosome 16.</title>
        <authorList>
            <person name="Martin J."/>
            <person name="Han C."/>
            <person name="Gordon L.A."/>
            <person name="Terry A."/>
            <person name="Prabhakar S."/>
            <person name="She X."/>
            <person name="Xie G."/>
            <person name="Hellsten U."/>
            <person name="Chan Y.M."/>
            <person name="Altherr M."/>
            <person name="Couronne O."/>
            <person name="Aerts A."/>
            <person name="Bajorek E."/>
            <person name="Black S."/>
            <person name="Blumer H."/>
            <person name="Branscomb E."/>
            <person name="Brown N.C."/>
            <person name="Bruno W.J."/>
            <person name="Buckingham J.M."/>
            <person name="Callen D.F."/>
            <person name="Campbell C.S."/>
            <person name="Campbell M.L."/>
            <person name="Campbell E.W."/>
            <person name="Caoile C."/>
            <person name="Challacombe J.F."/>
            <person name="Chasteen L.A."/>
            <person name="Chertkov O."/>
            <person name="Chi H.C."/>
            <person name="Christensen M."/>
            <person name="Clark L.M."/>
            <person name="Cohn J.D."/>
            <person name="Denys M."/>
            <person name="Detter J.C."/>
            <person name="Dickson M."/>
            <person name="Dimitrijevic-Bussod M."/>
            <person name="Escobar J."/>
            <person name="Fawcett J.J."/>
            <person name="Flowers D."/>
            <person name="Fotopulos D."/>
            <person name="Glavina T."/>
            <person name="Gomez M."/>
            <person name="Gonzales E."/>
            <person name="Goodstein D."/>
            <person name="Goodwin L.A."/>
            <person name="Grady D.L."/>
            <person name="Grigoriev I."/>
            <person name="Groza M."/>
            <person name="Hammon N."/>
            <person name="Hawkins T."/>
            <person name="Haydu L."/>
            <person name="Hildebrand C.E."/>
            <person name="Huang W."/>
            <person name="Israni S."/>
            <person name="Jett J."/>
            <person name="Jewett P.B."/>
            <person name="Kadner K."/>
            <person name="Kimball H."/>
            <person name="Kobayashi A."/>
            <person name="Krawczyk M.-C."/>
            <person name="Leyba T."/>
            <person name="Longmire J.L."/>
            <person name="Lopez F."/>
            <person name="Lou Y."/>
            <person name="Lowry S."/>
            <person name="Ludeman T."/>
            <person name="Manohar C.F."/>
            <person name="Mark G.A."/>
            <person name="McMurray K.L."/>
            <person name="Meincke L.J."/>
            <person name="Morgan J."/>
            <person name="Moyzis R.K."/>
            <person name="Mundt M.O."/>
            <person name="Munk A.C."/>
            <person name="Nandkeshwar R.D."/>
            <person name="Pitluck S."/>
            <person name="Pollard M."/>
            <person name="Predki P."/>
            <person name="Parson-Quintana B."/>
            <person name="Ramirez L."/>
            <person name="Rash S."/>
            <person name="Retterer J."/>
            <person name="Ricke D.O."/>
            <person name="Robinson D.L."/>
            <person name="Rodriguez A."/>
            <person name="Salamov A."/>
            <person name="Saunders E.H."/>
            <person name="Scott D."/>
            <person name="Shough T."/>
            <person name="Stallings R.L."/>
            <person name="Stalvey M."/>
            <person name="Sutherland R.D."/>
            <person name="Tapia R."/>
            <person name="Tesmer J.G."/>
            <person name="Thayer N."/>
            <person name="Thompson L.S."/>
            <person name="Tice H."/>
            <person name="Torney D.C."/>
            <person name="Tran-Gyamfi M."/>
            <person name="Tsai M."/>
            <person name="Ulanovsky L.E."/>
            <person name="Ustaszewska A."/>
            <person name="Vo N."/>
            <person name="White P.S."/>
            <person name="Williams A.L."/>
            <person name="Wills P.L."/>
            <person name="Wu J.-R."/>
            <person name="Wu K."/>
            <person name="Yang J."/>
            <person name="DeJong P."/>
            <person name="Bruce D."/>
            <person name="Doggett N.A."/>
            <person name="Deaven L."/>
            <person name="Schmutz J."/>
            <person name="Grimwood J."/>
            <person name="Richardson P."/>
            <person name="Rokhsar D.S."/>
            <person name="Eichler E.E."/>
            <person name="Gilna P."/>
            <person name="Lucas S.M."/>
            <person name="Myers R.M."/>
            <person name="Rubin E.M."/>
            <person name="Pennacchio L.A."/>
        </authorList>
    </citation>
    <scope>NUCLEOTIDE SEQUENCE [LARGE SCALE GENOMIC DNA]</scope>
</reference>
<reference key="8">
    <citation type="submission" date="2005-07" db="EMBL/GenBank/DDBJ databases">
        <authorList>
            <person name="Mural R.J."/>
            <person name="Istrail S."/>
            <person name="Sutton G.G."/>
            <person name="Florea L."/>
            <person name="Halpern A.L."/>
            <person name="Mobarry C.M."/>
            <person name="Lippert R."/>
            <person name="Walenz B."/>
            <person name="Shatkay H."/>
            <person name="Dew I."/>
            <person name="Miller J.R."/>
            <person name="Flanigan M.J."/>
            <person name="Edwards N.J."/>
            <person name="Bolanos R."/>
            <person name="Fasulo D."/>
            <person name="Halldorsson B.V."/>
            <person name="Hannenhalli S."/>
            <person name="Turner R."/>
            <person name="Yooseph S."/>
            <person name="Lu F."/>
            <person name="Nusskern D.R."/>
            <person name="Shue B.C."/>
            <person name="Zheng X.H."/>
            <person name="Zhong F."/>
            <person name="Delcher A.L."/>
            <person name="Huson D.H."/>
            <person name="Kravitz S.A."/>
            <person name="Mouchard L."/>
            <person name="Reinert K."/>
            <person name="Remington K.A."/>
            <person name="Clark A.G."/>
            <person name="Waterman M.S."/>
            <person name="Eichler E.E."/>
            <person name="Adams M.D."/>
            <person name="Hunkapiller M.W."/>
            <person name="Myers E.W."/>
            <person name="Venter J.C."/>
        </authorList>
    </citation>
    <scope>NUCLEOTIDE SEQUENCE [LARGE SCALE GENOMIC DNA]</scope>
</reference>
<reference key="9">
    <citation type="journal article" date="2004" name="Genome Res.">
        <title>The status, quality, and expansion of the NIH full-length cDNA project: the Mammalian Gene Collection (MGC).</title>
        <authorList>
            <consortium name="The MGC Project Team"/>
        </authorList>
    </citation>
    <scope>NUCLEOTIDE SEQUENCE [LARGE SCALE MRNA] (ISOFORM 1)</scope>
    <source>
        <tissue>Pancreas</tissue>
    </source>
</reference>
<reference key="10">
    <citation type="journal article" date="1996" name="Immunity">
        <title>TNF-dependent recruitment of the protein kinase RIP to the TNF receptor-1 signaling complex.</title>
        <authorList>
            <person name="Hsu H."/>
            <person name="Huang J."/>
            <person name="Shu H.-B."/>
            <person name="Baichwal V.R."/>
            <person name="Goeddel D.V."/>
        </authorList>
    </citation>
    <scope>FUNCTION</scope>
    <scope>IDENTIFICATION IN COMPLEX I</scope>
    <scope>INTERACTION WITH RIPK1</scope>
</reference>
<reference key="11">
    <citation type="journal article" date="1999" name="EMBO J.">
        <title>The interaction of p62 with RIP links the atypical PKCs to NF-kappaB activation.</title>
        <authorList>
            <person name="Sanz L."/>
            <person name="Sanchez P."/>
            <person name="Lallena M.-J."/>
            <person name="Diaz-Meco M.T."/>
            <person name="Moscat J."/>
        </authorList>
    </citation>
    <scope>INTERACTION WITH SQSTM1</scope>
</reference>
<reference key="12">
    <citation type="journal article" date="2000" name="Biochem. Biophys. Res. Commun.">
        <title>The serine/threonine kinase HIPK2 interacts with TRADD, but not with CD95 or TNF-R1 in 293T cells.</title>
        <authorList>
            <person name="Li X."/>
            <person name="Wang Y."/>
            <person name="Debatin K.-M."/>
            <person name="Hug H."/>
        </authorList>
    </citation>
    <scope>INTERACTION WITH HIPK2</scope>
</reference>
<reference key="13">
    <citation type="journal article" date="2001" name="J. Cell Biol.">
        <title>Keratin attenuates tumor necrosis factor-induced cytotoxicity through association with TRADD.</title>
        <authorList>
            <person name="Inada H."/>
            <person name="Izawa I."/>
            <person name="Nishizawa M."/>
            <person name="Fujita E."/>
            <person name="Kiyono T."/>
            <person name="Takahashi T."/>
            <person name="Momoi T."/>
            <person name="Inagaki M."/>
        </authorList>
    </citation>
    <scope>SUBCELLULAR LOCATION</scope>
    <scope>INTERACTION WITH KRT14 AND KRT18</scope>
</reference>
<reference key="14">
    <citation type="journal article" date="2003" name="Mol. Cell. Biol.">
        <title>TRUSS, a novel tumor necrosis factor receptor 1 scaffolding protein that mediates activation of the transcription factor NF-kappaB.</title>
        <authorList>
            <person name="Soond S.M."/>
            <person name="Terry J.L."/>
            <person name="Colbert J.D."/>
            <person name="Riches D.W.H."/>
        </authorList>
    </citation>
    <scope>IDENTIFICATION IN COMPLEX I WITH CHUCK; IKBKB AND IKBKG</scope>
    <scope>INTERACTION WITH TRPC4AP</scope>
</reference>
<reference key="15">
    <citation type="journal article" date="2004" name="J. Biol. Chem.">
        <title>AIP1/DAB2IP, a novel member of the Ras-GAP family, transduces TRAF2-induced ASK1-JNK activation.</title>
        <authorList>
            <person name="Zhang H."/>
            <person name="Zhang R."/>
            <person name="Luo Y."/>
            <person name="D'Alessio A."/>
            <person name="Pober J.S."/>
            <person name="Min W."/>
        </authorList>
    </citation>
    <scope>INTERACTION WITH DAB2IP</scope>
</reference>
<reference key="16">
    <citation type="journal article" date="2010" name="Cell Res.">
        <title>Tom70 mediates activation of interferon regulatory factor 3 on mitochondria.</title>
        <authorList>
            <person name="Liu X.Y."/>
            <person name="Wei B."/>
            <person name="Shi H.X."/>
            <person name="Shan Y.F."/>
            <person name="Wang C."/>
        </authorList>
    </citation>
    <scope>INTERACTION WITH TOMM70</scope>
</reference>
<reference key="17">
    <citation type="journal article" date="2011" name="BMC Syst. Biol.">
        <title>Initial characterization of the human central proteome.</title>
        <authorList>
            <person name="Burkard T.R."/>
            <person name="Planyavsky M."/>
            <person name="Kaupe I."/>
            <person name="Breitwieser F.P."/>
            <person name="Buerckstuemmer T."/>
            <person name="Bennett K.L."/>
            <person name="Superti-Furga G."/>
            <person name="Colinge J."/>
        </authorList>
    </citation>
    <scope>IDENTIFICATION BY MASS SPECTROMETRY [LARGE SCALE ANALYSIS]</scope>
</reference>
<reference key="18">
    <citation type="journal article" date="2011" name="Mol. Biol. Cell">
        <title>UXT-V1 protects cells against TNF-induced apoptosis through modulating complex II formation.</title>
        <authorList>
            <person name="Huang Y."/>
            <person name="Chen L."/>
            <person name="Zhou Y."/>
            <person name="Liu H."/>
            <person name="Yang J."/>
            <person name="Liu Z."/>
            <person name="Wang C."/>
        </authorList>
    </citation>
    <scope>IDENTIFICATION IN APOPTOTIC COMPLEX I</scope>
</reference>
<reference key="19">
    <citation type="journal article" date="2013" name="Cell Death Dis.">
        <title>EVER2 protein binds TRADD to promote TNF-alpha-induced apoptosis.</title>
        <authorList>
            <person name="Gaud G."/>
            <person name="Guillemot D."/>
            <person name="Jacob Y."/>
            <person name="Favre M."/>
            <person name="Vuillier F."/>
        </authorList>
    </citation>
    <scope>INTERACTION WITH TMC8</scope>
</reference>
<reference key="20">
    <citation type="journal article" date="2013" name="Nature">
        <title>Pathogen blocks host death receptor signalling by arginine GlcNAcylation of death domains.</title>
        <authorList>
            <person name="Li S."/>
            <person name="Zhang L."/>
            <person name="Yao Q."/>
            <person name="Li L."/>
            <person name="Dong N."/>
            <person name="Rong J."/>
            <person name="Gao W."/>
            <person name="Ding X."/>
            <person name="Sun L."/>
            <person name="Chen X."/>
            <person name="Chen S."/>
            <person name="Shao F."/>
        </authorList>
    </citation>
    <scope>FUNCTION</scope>
    <scope>GLYCOSYLATION AT ARG-235 (MICROBIAL INFECTION)</scope>
    <scope>MUTAGENESIS OF ARG-235</scope>
</reference>
<reference key="21">
    <citation type="journal article" date="2014" name="Carcinogenesis">
        <title>SH3RF2 functions as an oncogene by mediating PAK4 protein stability.</title>
        <authorList>
            <person name="Kim T.W."/>
            <person name="Kang Y.K."/>
            <person name="Park Z.Y."/>
            <person name="Kim Y.H."/>
            <person name="Hong S.W."/>
            <person name="Oh S.J."/>
            <person name="Sohn H.A."/>
            <person name="Yang S.J."/>
            <person name="Jang Y.J."/>
            <person name="Lee D.C."/>
            <person name="Kim S.Y."/>
            <person name="Yoo H.S."/>
            <person name="Kim E."/>
            <person name="Yeom Y.I."/>
            <person name="Park K.C."/>
        </authorList>
    </citation>
    <scope>INTERACTION WITH TNFRSF1A</scope>
</reference>
<reference key="22">
    <citation type="journal article" date="2017" name="Infect. Immun.">
        <title>SseK1 and SseK3 type III secretion system effectors inhibit NF-kappaB signaling and necroptotic cell death in salmonella-infected macrophages.</title>
        <authorList>
            <person name="Guenster R.A."/>
            <person name="Matthews S.A."/>
            <person name="Holden D.W."/>
            <person name="Thurston T.L.M."/>
        </authorList>
    </citation>
    <scope>GLYCOSYLATION (MICROBIAL INFECTION)</scope>
</reference>
<reference key="23">
    <citation type="journal article" date="2018" name="J. Biol. Chem.">
        <title>Structural basis for the glycosyltransferase activity of the Salmonella effector SseK3.</title>
        <authorList>
            <person name="Esposito D."/>
            <person name="Gunster R.A."/>
            <person name="Martino L."/>
            <person name="El Omari K."/>
            <person name="Wagner A."/>
            <person name="Thurston T.L.M."/>
            <person name="Rittinger K."/>
        </authorList>
    </citation>
    <scope>GLYCOSYLATION (MICROBIAL INFECTION)</scope>
</reference>
<reference key="24">
    <citation type="journal article" date="2019" name="Mol. Cell. Proteomics">
        <title>Salmonella effectors SseK1 and SseK3 target death domain proteins in the TNF and TRAIL signaling pathways.</title>
        <authorList>
            <person name="Newson J.P.M."/>
            <person name="Scott N.E."/>
            <person name="Yeuk Wah Chung I."/>
            <person name="Wong Fok Lung T."/>
            <person name="Giogha C."/>
            <person name="Gan J."/>
            <person name="Wang N."/>
            <person name="Strugnell R.A."/>
            <person name="Brown N.F."/>
            <person name="Cygler M."/>
            <person name="Pearson J.S."/>
            <person name="Hartland E.L."/>
        </authorList>
    </citation>
    <scope>GLYCOSYLATION (MICROBIAL INFECTION)</scope>
</reference>
<reference key="25">
    <citation type="journal article" date="2020" name="Front. Cell Dev. Biol.">
        <title>Arg-GlcNAcylation on TRADD by NleB and SseK1 is crucial for bacterial pathogenesis.</title>
        <authorList>
            <person name="Xue J."/>
            <person name="Hu S."/>
            <person name="Huang Y."/>
            <person name="Zhang Q."/>
            <person name="Yi X."/>
            <person name="Pan X."/>
            <person name="Li S."/>
        </authorList>
    </citation>
    <scope>GLYCOSYLATION AT ARG-235 AND ARG-245 (MICROBIAL INFECTION)</scope>
    <scope>MUTAGENESIS OF ARG-235 AND ARG-245</scope>
</reference>
<reference key="26">
    <citation type="journal article" date="2000" name="Mol. Cell">
        <title>Solution structure of N-TRADD and characterization of the interaction of N-TRADD and C-TRAF2, a key step in the TNFR1 signaling pathway.</title>
        <authorList>
            <person name="Tsao D.H."/>
            <person name="McDonagh T."/>
            <person name="Telliez J.-B."/>
            <person name="Hsu S."/>
            <person name="Malakian K."/>
            <person name="Xu G.Y."/>
            <person name="Lin L.L."/>
        </authorList>
    </citation>
    <scope>STRUCTURE BY NMR OF 1-179</scope>
</reference>
<reference key="27">
    <citation type="journal article" date="2000" name="Cell">
        <title>A novel mechanism of TRAF signaling revealed by structural and functional analyses of the TRADD-TRAF2 interaction.</title>
        <authorList>
            <person name="Park Y.C."/>
            <person name="Ye H."/>
            <person name="Hsia C."/>
            <person name="Segal D."/>
            <person name="Rich R.L."/>
            <person name="Liou H.C."/>
            <person name="Myszka D.G."/>
            <person name="Wu H."/>
        </authorList>
    </citation>
    <scope>X-RAY CRYSTALLOGRAPHY (2.0 ANGSTROMS) OF 1-179 IN COMPLEX WITH TRAF2</scope>
</reference>
<reference evidence="26" key="28">
    <citation type="journal article" date="2019" name="Mol. Cell">
        <title>Structural and functional insights into host death domains inactivation by the bacterial arginine GlcNAcyltransferase effector.</title>
        <authorList>
            <person name="Ding J."/>
            <person name="Pan X."/>
            <person name="Du L."/>
            <person name="Yao Q."/>
            <person name="Xue J."/>
            <person name="Yao H."/>
            <person name="Wang D.C."/>
            <person name="Li S."/>
            <person name="Shao F."/>
        </authorList>
    </citation>
    <scope>X-RAY CRYSTALLOGRAPHY (1.45 ANGSTROMS) OF 195-312</scope>
    <scope>GLYCOSYLATION AT ARG-235 (MICROBIAL INFECTION)</scope>
</reference>
<comment type="function">
    <text evidence="1 13 20 21">Adapter molecule for TNFRSF1A/TNFR1 that specifically associates with the cytoplasmic domain of activated TNFRSF1A/TNFR1 mediating its interaction with FADD (PubMed:23955153, PubMed:7758105, PubMed:8612133). Overexpression of TRADD leads to two major TNF-induced responses, apoptosis and activation of NF-kappa-B (PubMed:7758105, PubMed:8612133). The nuclear form acts as a tumor suppressor by preventing ubiquitination and degradation of isoform p19ARF/ARF of CDKN2A by TRIP12: acts by interacting with TRIP12, leading to disrupt interaction between TRIP12 and isoform p19ARF/ARF of CDKN2A (By similarity).</text>
</comment>
<comment type="subunit">
    <text evidence="1 4 5 6 7 8 9 10 11 12 14 20 21">Stimulation of TNF-alpha receptor TNFRSF1A leads to the formation of two distinct signaling complexes (PubMed:14585990, PubMed:21307340, PubMed:7758105, PubMed:8612133). Plasma membrane-bound complex I is composed of TNFRSF1A, TRADD, RIPK1, TRAF2 and BIRC2/c-IAP1 or BIRC3 which interacts with CHUCK/IKK-alpha, IKBKB/IKK-beta and IKBKG/IKK-gamma promoting cell survival (PubMed:14585990, PubMed:21307340, PubMed:7758105, PubMed:8612133). Subsequently, TRADD, RIPK1 and TRAF2 dissociate from TNFRSF1A and form cytoplasmic complex II with FADD and caspase CASP8 promoting cell apoptosis (PubMed:21307340). Within complex I, interacts with TNFRSF1A/TNFR1, TRAF2 and kinase RIPK1 (PubMed:10892748, PubMed:7758105, PubMed:8612133). Within complex I, interacts with TRPC4AP; the interaction promotes NF-kappa B activation (PubMed:14585990). UXT1 associates with complex I; the interaction prevents the formation of complex II (PubMed:21307340). Within complex I Interacts with scaffold protein DAB2IP (PubMed:15310755). Interacts with autophagy receptor SQSTM1 (PubMed:10356400). Interacts with E3 ligase TRIP12 (By similarity). Interacts with kinase HIPK2 (PubMed:11032752). Interacts with keratin KRT14 (PubMed:11684708). Interacts with keratin KRT18 (PubMed:11684708). Interacts with keratins KRT16 and KRT17 (By similarity). Interacts with FADD (By similarity). Interacts with TOMM70 (PubMed:20628368). Interacts with TMC8; the interaction impairs the formation of complex I and facilites complex II formation (PubMed:23429285).</text>
</comment>
<comment type="interaction">
    <interactant intactId="EBI-359215">
        <id>Q15628</id>
    </interactant>
    <interactant intactId="EBI-494804">
        <id>Q13158</id>
        <label>FADD</label>
    </interactant>
    <organismsDiffer>false</organismsDiffer>
    <experiments>7</experiments>
</comment>
<comment type="interaction">
    <interactant intactId="EBI-359215">
        <id>Q15628</id>
    </interactant>
    <interactant intactId="EBI-297888">
        <id>P05783</id>
        <label>KRT18</label>
    </interactant>
    <organismsDiffer>false</organismsDiffer>
    <experiments>11</experiments>
</comment>
<comment type="interaction">
    <interactant intactId="EBI-359215">
        <id>Q15628</id>
    </interactant>
    <interactant intactId="EBI-299451">
        <id>P19438</id>
        <label>TNFRSF1A</label>
    </interactant>
    <organismsDiffer>false</organismsDiffer>
    <experiments>14</experiments>
</comment>
<comment type="interaction">
    <interactant intactId="EBI-359215">
        <id>Q15628</id>
    </interactant>
    <interactant intactId="EBI-359215">
        <id>Q15628</id>
        <label>TRADD</label>
    </interactant>
    <organismsDiffer>false</organismsDiffer>
    <experiments>5</experiments>
</comment>
<comment type="interaction">
    <interactant intactId="EBI-359215">
        <id>Q15628</id>
    </interactant>
    <interactant intactId="EBI-355744">
        <id>Q12933</id>
        <label>TRAF2</label>
    </interactant>
    <organismsDiffer>false</organismsDiffer>
    <experiments>13</experiments>
</comment>
<comment type="interaction">
    <interactant intactId="EBI-359215">
        <id>Q15628</id>
    </interactant>
    <interactant intactId="EBI-6973030">
        <id>P03230</id>
        <label>LMP1</label>
    </interactant>
    <organismsDiffer>true</organismsDiffer>
    <experiments>4</experiments>
</comment>
<comment type="interaction">
    <interactant intactId="EBI-359215">
        <id>Q15628</id>
    </interactant>
    <interactant intactId="EBI-16070376">
        <id>B7UI21</id>
        <label>nleB1</label>
    </interactant>
    <organismsDiffer>true</organismsDiffer>
    <experiments>7</experiments>
</comment>
<comment type="subcellular location">
    <subcellularLocation>
        <location evidence="1">Nucleus</location>
    </subcellularLocation>
    <subcellularLocation>
        <location evidence="7">Cytoplasm</location>
    </subcellularLocation>
    <subcellularLocation>
        <location evidence="7">Cytoplasm</location>
        <location evidence="7">Cytoskeleton</location>
    </subcellularLocation>
    <text evidence="1">Shuttles between the cytoplasm and the nucleus.</text>
</comment>
<comment type="alternative products">
    <event type="alternative splicing"/>
    <isoform>
        <id>Q15628-1</id>
        <name>1</name>
        <sequence type="displayed"/>
    </isoform>
    <isoform>
        <id>Q15628-2</id>
        <name>2</name>
        <sequence type="described" ref="VSP_056526"/>
    </isoform>
</comment>
<comment type="tissue specificity">
    <text evidence="20">Found in all examined tissues.</text>
</comment>
<comment type="domain">
    <text evidence="20">Requires the intact death domain to associate with TNFRSF1A/TNFR1.</text>
</comment>
<comment type="PTM">
    <text evidence="13 15 16 17 19">(Microbial infection) Glycosylated at Arg-235 by enteropathogenic E.coli protein NleB1, C.rodentium protein NleB and S.typhimurium proteins Ssek1 and Ssek3: arginine GlcNAcylation prevents homotypic/heterotypic death domain interactions and assembly of the oligomeric TNFRSF1A/TNFR1 complex, thereby disrupting TNF signaling.</text>
</comment>
<comment type="sequence caution" evidence="24">
    <conflict type="erroneous initiation">
        <sequence resource="EMBL-CDS" id="AAA98482"/>
    </conflict>
    <text>Extended N-terminus.</text>
</comment>
<proteinExistence type="evidence at protein level"/>
<protein>
    <recommendedName>
        <fullName evidence="24">Tumor necrosis factor receptor type 1-associated DEATH domain protein</fullName>
        <shortName evidence="23">TNFR1-associated DEATH domain protein</shortName>
    </recommendedName>
    <alternativeName>
        <fullName evidence="23">TNFRSF1A-associated via death domain</fullName>
    </alternativeName>
</protein>
<name>TRADD_HUMAN</name>